<gene>
    <name evidence="1" type="primary">engB</name>
    <name type="ordered locus">GTNG_2578</name>
</gene>
<organism>
    <name type="scientific">Geobacillus thermodenitrificans (strain NG80-2)</name>
    <dbReference type="NCBI Taxonomy" id="420246"/>
    <lineage>
        <taxon>Bacteria</taxon>
        <taxon>Bacillati</taxon>
        <taxon>Bacillota</taxon>
        <taxon>Bacilli</taxon>
        <taxon>Bacillales</taxon>
        <taxon>Anoxybacillaceae</taxon>
        <taxon>Geobacillus</taxon>
    </lineage>
</organism>
<proteinExistence type="inferred from homology"/>
<comment type="function">
    <text evidence="1">Necessary for normal cell division and for the maintenance of normal septation.</text>
</comment>
<comment type="cofactor">
    <cofactor evidence="1">
        <name>Mg(2+)</name>
        <dbReference type="ChEBI" id="CHEBI:18420"/>
    </cofactor>
</comment>
<comment type="similarity">
    <text evidence="1">Belongs to the TRAFAC class TrmE-Era-EngA-EngB-Septin-like GTPase superfamily. EngB GTPase family.</text>
</comment>
<feature type="chain" id="PRO_1000005814" description="Probable GTP-binding protein EngB">
    <location>
        <begin position="1"/>
        <end position="195"/>
    </location>
</feature>
<feature type="domain" description="EngB-type G" evidence="1">
    <location>
        <begin position="22"/>
        <end position="195"/>
    </location>
</feature>
<feature type="binding site" evidence="1">
    <location>
        <begin position="30"/>
        <end position="37"/>
    </location>
    <ligand>
        <name>GTP</name>
        <dbReference type="ChEBI" id="CHEBI:37565"/>
    </ligand>
</feature>
<feature type="binding site" evidence="1">
    <location>
        <position position="37"/>
    </location>
    <ligand>
        <name>Mg(2+)</name>
        <dbReference type="ChEBI" id="CHEBI:18420"/>
    </ligand>
</feature>
<feature type="binding site" evidence="1">
    <location>
        <begin position="57"/>
        <end position="61"/>
    </location>
    <ligand>
        <name>GTP</name>
        <dbReference type="ChEBI" id="CHEBI:37565"/>
    </ligand>
</feature>
<feature type="binding site" evidence="1">
    <location>
        <position position="59"/>
    </location>
    <ligand>
        <name>Mg(2+)</name>
        <dbReference type="ChEBI" id="CHEBI:18420"/>
    </ligand>
</feature>
<feature type="binding site" evidence="1">
    <location>
        <begin position="75"/>
        <end position="78"/>
    </location>
    <ligand>
        <name>GTP</name>
        <dbReference type="ChEBI" id="CHEBI:37565"/>
    </ligand>
</feature>
<feature type="binding site" evidence="1">
    <location>
        <begin position="142"/>
        <end position="145"/>
    </location>
    <ligand>
        <name>GTP</name>
        <dbReference type="ChEBI" id="CHEBI:37565"/>
    </ligand>
</feature>
<feature type="binding site" evidence="1">
    <location>
        <begin position="174"/>
        <end position="176"/>
    </location>
    <ligand>
        <name>GTP</name>
        <dbReference type="ChEBI" id="CHEBI:37565"/>
    </ligand>
</feature>
<dbReference type="EMBL" id="CP000557">
    <property type="protein sequence ID" value="ABO67923.1"/>
    <property type="molecule type" value="Genomic_DNA"/>
</dbReference>
<dbReference type="RefSeq" id="WP_008881107.1">
    <property type="nucleotide sequence ID" value="NC_009328.1"/>
</dbReference>
<dbReference type="SMR" id="A4IRG9"/>
<dbReference type="GeneID" id="87623274"/>
<dbReference type="KEGG" id="gtn:GTNG_2578"/>
<dbReference type="eggNOG" id="COG0218">
    <property type="taxonomic scope" value="Bacteria"/>
</dbReference>
<dbReference type="HOGENOM" id="CLU_033732_3_0_9"/>
<dbReference type="Proteomes" id="UP000001578">
    <property type="component" value="Chromosome"/>
</dbReference>
<dbReference type="GO" id="GO:0005829">
    <property type="term" value="C:cytosol"/>
    <property type="evidence" value="ECO:0007669"/>
    <property type="project" value="TreeGrafter"/>
</dbReference>
<dbReference type="GO" id="GO:0005525">
    <property type="term" value="F:GTP binding"/>
    <property type="evidence" value="ECO:0007669"/>
    <property type="project" value="UniProtKB-UniRule"/>
</dbReference>
<dbReference type="GO" id="GO:0046872">
    <property type="term" value="F:metal ion binding"/>
    <property type="evidence" value="ECO:0007669"/>
    <property type="project" value="UniProtKB-KW"/>
</dbReference>
<dbReference type="GO" id="GO:0000917">
    <property type="term" value="P:division septum assembly"/>
    <property type="evidence" value="ECO:0007669"/>
    <property type="project" value="UniProtKB-KW"/>
</dbReference>
<dbReference type="CDD" id="cd01876">
    <property type="entry name" value="YihA_EngB"/>
    <property type="match status" value="1"/>
</dbReference>
<dbReference type="FunFam" id="3.40.50.300:FF:000098">
    <property type="entry name" value="Probable GTP-binding protein EngB"/>
    <property type="match status" value="1"/>
</dbReference>
<dbReference type="Gene3D" id="3.40.50.300">
    <property type="entry name" value="P-loop containing nucleotide triphosphate hydrolases"/>
    <property type="match status" value="1"/>
</dbReference>
<dbReference type="HAMAP" id="MF_00321">
    <property type="entry name" value="GTPase_EngB"/>
    <property type="match status" value="1"/>
</dbReference>
<dbReference type="InterPro" id="IPR030393">
    <property type="entry name" value="G_ENGB_dom"/>
</dbReference>
<dbReference type="InterPro" id="IPR006073">
    <property type="entry name" value="GTP-bd"/>
</dbReference>
<dbReference type="InterPro" id="IPR019987">
    <property type="entry name" value="GTP-bd_ribosome_bio_YsxC"/>
</dbReference>
<dbReference type="InterPro" id="IPR027417">
    <property type="entry name" value="P-loop_NTPase"/>
</dbReference>
<dbReference type="NCBIfam" id="TIGR03598">
    <property type="entry name" value="GTPase_YsxC"/>
    <property type="match status" value="1"/>
</dbReference>
<dbReference type="PANTHER" id="PTHR11649:SF13">
    <property type="entry name" value="ENGB-TYPE G DOMAIN-CONTAINING PROTEIN"/>
    <property type="match status" value="1"/>
</dbReference>
<dbReference type="PANTHER" id="PTHR11649">
    <property type="entry name" value="MSS1/TRME-RELATED GTP-BINDING PROTEIN"/>
    <property type="match status" value="1"/>
</dbReference>
<dbReference type="Pfam" id="PF01926">
    <property type="entry name" value="MMR_HSR1"/>
    <property type="match status" value="1"/>
</dbReference>
<dbReference type="SUPFAM" id="SSF52540">
    <property type="entry name" value="P-loop containing nucleoside triphosphate hydrolases"/>
    <property type="match status" value="1"/>
</dbReference>
<dbReference type="PROSITE" id="PS51706">
    <property type="entry name" value="G_ENGB"/>
    <property type="match status" value="1"/>
</dbReference>
<protein>
    <recommendedName>
        <fullName evidence="1">Probable GTP-binding protein EngB</fullName>
    </recommendedName>
</protein>
<reference key="1">
    <citation type="journal article" date="2007" name="Proc. Natl. Acad. Sci. U.S.A.">
        <title>Genome and proteome of long-chain alkane degrading Geobacillus thermodenitrificans NG80-2 isolated from a deep-subsurface oil reservoir.</title>
        <authorList>
            <person name="Feng L."/>
            <person name="Wang W."/>
            <person name="Cheng J."/>
            <person name="Ren Y."/>
            <person name="Zhao G."/>
            <person name="Gao C."/>
            <person name="Tang Y."/>
            <person name="Liu X."/>
            <person name="Han W."/>
            <person name="Peng X."/>
            <person name="Liu R."/>
            <person name="Wang L."/>
        </authorList>
    </citation>
    <scope>NUCLEOTIDE SEQUENCE [LARGE SCALE GENOMIC DNA]</scope>
    <source>
        <strain>NG80-2</strain>
    </source>
</reference>
<accession>A4IRG9</accession>
<sequence>MNITKAELVISAVKPEQYPDSGRPEVALAGRSNVGKSSFINKMINRKNLARTSSKPGKTQTLNFYLINDSFYFVDVPGYGFARVSKQERQKWGKMMETYFTTRETLKAALLLVDLRHPPTKDDVMMYEFFKHYEIPVIVIATKADKVPRGKQQKHAKIARETLRLAAGDSLILFSSETGQGKEEAWAALLPFLTE</sequence>
<name>ENGB_GEOTN</name>
<keyword id="KW-0131">Cell cycle</keyword>
<keyword id="KW-0132">Cell division</keyword>
<keyword id="KW-0342">GTP-binding</keyword>
<keyword id="KW-0460">Magnesium</keyword>
<keyword id="KW-0479">Metal-binding</keyword>
<keyword id="KW-0547">Nucleotide-binding</keyword>
<keyword id="KW-0717">Septation</keyword>
<evidence type="ECO:0000255" key="1">
    <source>
        <dbReference type="HAMAP-Rule" id="MF_00321"/>
    </source>
</evidence>